<organism>
    <name type="scientific">Brucella abortus (strain 2308)</name>
    <dbReference type="NCBI Taxonomy" id="359391"/>
    <lineage>
        <taxon>Bacteria</taxon>
        <taxon>Pseudomonadati</taxon>
        <taxon>Pseudomonadota</taxon>
        <taxon>Alphaproteobacteria</taxon>
        <taxon>Hyphomicrobiales</taxon>
        <taxon>Brucellaceae</taxon>
        <taxon>Brucella/Ochrobactrum group</taxon>
        <taxon>Brucella</taxon>
    </lineage>
</organism>
<proteinExistence type="inferred from homology"/>
<evidence type="ECO:0000255" key="1">
    <source>
        <dbReference type="HAMAP-Rule" id="MF_00111"/>
    </source>
</evidence>
<dbReference type="EC" id="2.5.1.7" evidence="1"/>
<dbReference type="EMBL" id="AM040264">
    <property type="protein sequence ID" value="CAJ10243.1"/>
    <property type="molecule type" value="Genomic_DNA"/>
</dbReference>
<dbReference type="RefSeq" id="WP_002965536.1">
    <property type="nucleotide sequence ID" value="NZ_KN046823.1"/>
</dbReference>
<dbReference type="SMR" id="Q2YPB6"/>
<dbReference type="STRING" id="359391.BAB1_0287"/>
<dbReference type="GeneID" id="97534345"/>
<dbReference type="KEGG" id="bmf:BAB1_0287"/>
<dbReference type="PATRIC" id="fig|359391.11.peg.1706"/>
<dbReference type="HOGENOM" id="CLU_027387_0_0_5"/>
<dbReference type="UniPathway" id="UPA00219"/>
<dbReference type="Proteomes" id="UP000002719">
    <property type="component" value="Chromosome I"/>
</dbReference>
<dbReference type="GO" id="GO:0005737">
    <property type="term" value="C:cytoplasm"/>
    <property type="evidence" value="ECO:0007669"/>
    <property type="project" value="UniProtKB-SubCell"/>
</dbReference>
<dbReference type="GO" id="GO:0008760">
    <property type="term" value="F:UDP-N-acetylglucosamine 1-carboxyvinyltransferase activity"/>
    <property type="evidence" value="ECO:0007669"/>
    <property type="project" value="UniProtKB-UniRule"/>
</dbReference>
<dbReference type="GO" id="GO:0051301">
    <property type="term" value="P:cell division"/>
    <property type="evidence" value="ECO:0007669"/>
    <property type="project" value="UniProtKB-KW"/>
</dbReference>
<dbReference type="GO" id="GO:0071555">
    <property type="term" value="P:cell wall organization"/>
    <property type="evidence" value="ECO:0007669"/>
    <property type="project" value="UniProtKB-KW"/>
</dbReference>
<dbReference type="GO" id="GO:0009252">
    <property type="term" value="P:peptidoglycan biosynthetic process"/>
    <property type="evidence" value="ECO:0007669"/>
    <property type="project" value="UniProtKB-UniRule"/>
</dbReference>
<dbReference type="GO" id="GO:0008360">
    <property type="term" value="P:regulation of cell shape"/>
    <property type="evidence" value="ECO:0007669"/>
    <property type="project" value="UniProtKB-KW"/>
</dbReference>
<dbReference type="GO" id="GO:0019277">
    <property type="term" value="P:UDP-N-acetylgalactosamine biosynthetic process"/>
    <property type="evidence" value="ECO:0007669"/>
    <property type="project" value="InterPro"/>
</dbReference>
<dbReference type="CDD" id="cd01555">
    <property type="entry name" value="UdpNAET"/>
    <property type="match status" value="1"/>
</dbReference>
<dbReference type="FunFam" id="3.65.10.10:FF:000001">
    <property type="entry name" value="UDP-N-acetylglucosamine 1-carboxyvinyltransferase"/>
    <property type="match status" value="1"/>
</dbReference>
<dbReference type="Gene3D" id="3.65.10.10">
    <property type="entry name" value="Enolpyruvate transferase domain"/>
    <property type="match status" value="2"/>
</dbReference>
<dbReference type="HAMAP" id="MF_00111">
    <property type="entry name" value="MurA"/>
    <property type="match status" value="1"/>
</dbReference>
<dbReference type="InterPro" id="IPR001986">
    <property type="entry name" value="Enolpyruvate_Tfrase_dom"/>
</dbReference>
<dbReference type="InterPro" id="IPR036968">
    <property type="entry name" value="Enolpyruvate_Tfrase_sf"/>
</dbReference>
<dbReference type="InterPro" id="IPR050068">
    <property type="entry name" value="MurA_subfamily"/>
</dbReference>
<dbReference type="InterPro" id="IPR013792">
    <property type="entry name" value="RNA3'P_cycl/enolpyr_Trfase_a/b"/>
</dbReference>
<dbReference type="InterPro" id="IPR005750">
    <property type="entry name" value="UDP_GlcNAc_COvinyl_MurA"/>
</dbReference>
<dbReference type="NCBIfam" id="TIGR01072">
    <property type="entry name" value="murA"/>
    <property type="match status" value="1"/>
</dbReference>
<dbReference type="NCBIfam" id="NF006873">
    <property type="entry name" value="PRK09369.1"/>
    <property type="match status" value="1"/>
</dbReference>
<dbReference type="PANTHER" id="PTHR43783">
    <property type="entry name" value="UDP-N-ACETYLGLUCOSAMINE 1-CARBOXYVINYLTRANSFERASE"/>
    <property type="match status" value="1"/>
</dbReference>
<dbReference type="PANTHER" id="PTHR43783:SF1">
    <property type="entry name" value="UDP-N-ACETYLGLUCOSAMINE 1-CARBOXYVINYLTRANSFERASE"/>
    <property type="match status" value="1"/>
</dbReference>
<dbReference type="Pfam" id="PF00275">
    <property type="entry name" value="EPSP_synthase"/>
    <property type="match status" value="1"/>
</dbReference>
<dbReference type="SUPFAM" id="SSF55205">
    <property type="entry name" value="EPT/RTPC-like"/>
    <property type="match status" value="1"/>
</dbReference>
<protein>
    <recommendedName>
        <fullName evidence="1">UDP-N-acetylglucosamine 1-carboxyvinyltransferase</fullName>
        <ecNumber evidence="1">2.5.1.7</ecNumber>
    </recommendedName>
    <alternativeName>
        <fullName evidence="1">Enoylpyruvate transferase</fullName>
    </alternativeName>
    <alternativeName>
        <fullName evidence="1">UDP-N-acetylglucosamine enolpyruvyl transferase</fullName>
        <shortName evidence="1">EPT</shortName>
    </alternativeName>
</protein>
<comment type="function">
    <text evidence="1">Cell wall formation. Adds enolpyruvyl to UDP-N-acetylglucosamine.</text>
</comment>
<comment type="catalytic activity">
    <reaction evidence="1">
        <text>phosphoenolpyruvate + UDP-N-acetyl-alpha-D-glucosamine = UDP-N-acetyl-3-O-(1-carboxyvinyl)-alpha-D-glucosamine + phosphate</text>
        <dbReference type="Rhea" id="RHEA:18681"/>
        <dbReference type="ChEBI" id="CHEBI:43474"/>
        <dbReference type="ChEBI" id="CHEBI:57705"/>
        <dbReference type="ChEBI" id="CHEBI:58702"/>
        <dbReference type="ChEBI" id="CHEBI:68483"/>
        <dbReference type="EC" id="2.5.1.7"/>
    </reaction>
</comment>
<comment type="pathway">
    <text evidence="1">Cell wall biogenesis; peptidoglycan biosynthesis.</text>
</comment>
<comment type="subcellular location">
    <subcellularLocation>
        <location evidence="1">Cytoplasm</location>
    </subcellularLocation>
</comment>
<comment type="similarity">
    <text evidence="1">Belongs to the EPSP synthase family. MurA subfamily.</text>
</comment>
<sequence length="429" mass="45719">MDRIKIVGGNKLNGVIPISGAKNAALPLMIASLLTDDTLTLENVPHLADVEQLIRILSNHGVDYSVNGRREHQNGPYSRTIHFTARNIVDTTAPYELVSRMRASFWVIGPLLARMGEANVSLPGGCAIGTRPVDLLLDALLALGAEIDIENGYAKAKARNGLVGARYKFPKVSVGATHVMLMAATLAKGETIIENAAREPEVANLADCLNAMGAKISGAGSSTIHVQGVTNLSGARVRIIPDRIEAGTYAMAVAMTGGDVLLEGAQESQLSCVLETLRQAGAEINETNSGLRVVRNGHGIQPVDITTDPFPGFPTDLQAQFMGLMTRAKGTSHITETIFENRFMHVQELARLGAKISLSGQTATVEGVERLKGAQVMATDLRASVSLVIAGLAAEGETIVNRVYHLDRGFERLEEKLSRCGADVKRISG</sequence>
<feature type="chain" id="PRO_0000231180" description="UDP-N-acetylglucosamine 1-carboxyvinyltransferase">
    <location>
        <begin position="1"/>
        <end position="429"/>
    </location>
</feature>
<feature type="active site" description="Proton donor" evidence="1">
    <location>
        <position position="126"/>
    </location>
</feature>
<feature type="binding site" evidence="1">
    <location>
        <begin position="22"/>
        <end position="23"/>
    </location>
    <ligand>
        <name>phosphoenolpyruvate</name>
        <dbReference type="ChEBI" id="CHEBI:58702"/>
    </ligand>
</feature>
<feature type="binding site" evidence="1">
    <location>
        <position position="102"/>
    </location>
    <ligand>
        <name>UDP-N-acetyl-alpha-D-glucosamine</name>
        <dbReference type="ChEBI" id="CHEBI:57705"/>
    </ligand>
</feature>
<feature type="binding site" evidence="1">
    <location>
        <begin position="131"/>
        <end position="135"/>
    </location>
    <ligand>
        <name>UDP-N-acetyl-alpha-D-glucosamine</name>
        <dbReference type="ChEBI" id="CHEBI:57705"/>
    </ligand>
</feature>
<feature type="binding site" evidence="1">
    <location>
        <begin position="171"/>
        <end position="174"/>
    </location>
    <ligand>
        <name>UDP-N-acetyl-alpha-D-glucosamine</name>
        <dbReference type="ChEBI" id="CHEBI:57705"/>
    </ligand>
</feature>
<feature type="binding site" evidence="1">
    <location>
        <position position="316"/>
    </location>
    <ligand>
        <name>UDP-N-acetyl-alpha-D-glucosamine</name>
        <dbReference type="ChEBI" id="CHEBI:57705"/>
    </ligand>
</feature>
<feature type="binding site" evidence="1">
    <location>
        <position position="338"/>
    </location>
    <ligand>
        <name>UDP-N-acetyl-alpha-D-glucosamine</name>
        <dbReference type="ChEBI" id="CHEBI:57705"/>
    </ligand>
</feature>
<feature type="modified residue" description="2-(S-cysteinyl)pyruvic acid O-phosphothioketal" evidence="1">
    <location>
        <position position="126"/>
    </location>
</feature>
<reference key="1">
    <citation type="journal article" date="2005" name="Infect. Immun.">
        <title>Whole-genome analyses of speciation events in pathogenic Brucellae.</title>
        <authorList>
            <person name="Chain P.S."/>
            <person name="Comerci D.J."/>
            <person name="Tolmasky M.E."/>
            <person name="Larimer F.W."/>
            <person name="Malfatti S.A."/>
            <person name="Vergez L.M."/>
            <person name="Aguero F."/>
            <person name="Land M.L."/>
            <person name="Ugalde R.A."/>
            <person name="Garcia E."/>
        </authorList>
    </citation>
    <scope>NUCLEOTIDE SEQUENCE [LARGE SCALE GENOMIC DNA]</scope>
    <source>
        <strain>2308</strain>
    </source>
</reference>
<keyword id="KW-0131">Cell cycle</keyword>
<keyword id="KW-0132">Cell division</keyword>
<keyword id="KW-0133">Cell shape</keyword>
<keyword id="KW-0961">Cell wall biogenesis/degradation</keyword>
<keyword id="KW-0963">Cytoplasm</keyword>
<keyword id="KW-0573">Peptidoglycan synthesis</keyword>
<keyword id="KW-0670">Pyruvate</keyword>
<keyword id="KW-1185">Reference proteome</keyword>
<keyword id="KW-0808">Transferase</keyword>
<name>MURA_BRUA2</name>
<accession>Q2YPB6</accession>
<gene>
    <name evidence="1" type="primary">murA</name>
    <name type="ordered locus">BAB1_0287</name>
</gene>